<name>RL21_ACIET</name>
<evidence type="ECO:0000255" key="1">
    <source>
        <dbReference type="HAMAP-Rule" id="MF_01363"/>
    </source>
</evidence>
<evidence type="ECO:0000305" key="2"/>
<sequence>MYAVIKTGGKQYRVAAGEKIKVEQIAAEVGQEIVIDQVLAVGNGAELKVGTPLVSGATVKATVVAHGKHDKVRIFKMRRRKHYQKRQGHRQQFTELQIQAIAA</sequence>
<feature type="chain" id="PRO_1000166720" description="Large ribosomal subunit protein bL21">
    <location>
        <begin position="1"/>
        <end position="103"/>
    </location>
</feature>
<dbReference type="EMBL" id="CP001392">
    <property type="protein sequence ID" value="ACM32249.1"/>
    <property type="molecule type" value="Genomic_DNA"/>
</dbReference>
<dbReference type="RefSeq" id="WP_012655753.1">
    <property type="nucleotide sequence ID" value="NC_011992.1"/>
</dbReference>
<dbReference type="SMR" id="B9MDZ5"/>
<dbReference type="GeneID" id="84682669"/>
<dbReference type="KEGG" id="dia:Dtpsy_0770"/>
<dbReference type="eggNOG" id="COG0261">
    <property type="taxonomic scope" value="Bacteria"/>
</dbReference>
<dbReference type="HOGENOM" id="CLU_061463_3_2_4"/>
<dbReference type="Proteomes" id="UP000000450">
    <property type="component" value="Chromosome"/>
</dbReference>
<dbReference type="GO" id="GO:0005737">
    <property type="term" value="C:cytoplasm"/>
    <property type="evidence" value="ECO:0007669"/>
    <property type="project" value="UniProtKB-ARBA"/>
</dbReference>
<dbReference type="GO" id="GO:1990904">
    <property type="term" value="C:ribonucleoprotein complex"/>
    <property type="evidence" value="ECO:0007669"/>
    <property type="project" value="UniProtKB-KW"/>
</dbReference>
<dbReference type="GO" id="GO:0005840">
    <property type="term" value="C:ribosome"/>
    <property type="evidence" value="ECO:0007669"/>
    <property type="project" value="UniProtKB-KW"/>
</dbReference>
<dbReference type="GO" id="GO:0019843">
    <property type="term" value="F:rRNA binding"/>
    <property type="evidence" value="ECO:0007669"/>
    <property type="project" value="UniProtKB-UniRule"/>
</dbReference>
<dbReference type="GO" id="GO:0003735">
    <property type="term" value="F:structural constituent of ribosome"/>
    <property type="evidence" value="ECO:0007669"/>
    <property type="project" value="InterPro"/>
</dbReference>
<dbReference type="GO" id="GO:0006412">
    <property type="term" value="P:translation"/>
    <property type="evidence" value="ECO:0007669"/>
    <property type="project" value="UniProtKB-UniRule"/>
</dbReference>
<dbReference type="HAMAP" id="MF_01363">
    <property type="entry name" value="Ribosomal_bL21"/>
    <property type="match status" value="1"/>
</dbReference>
<dbReference type="InterPro" id="IPR028909">
    <property type="entry name" value="bL21-like"/>
</dbReference>
<dbReference type="InterPro" id="IPR036164">
    <property type="entry name" value="bL21-like_sf"/>
</dbReference>
<dbReference type="InterPro" id="IPR001787">
    <property type="entry name" value="Ribosomal_bL21"/>
</dbReference>
<dbReference type="InterPro" id="IPR018258">
    <property type="entry name" value="Ribosomal_bL21_CS"/>
</dbReference>
<dbReference type="NCBIfam" id="TIGR00061">
    <property type="entry name" value="L21"/>
    <property type="match status" value="1"/>
</dbReference>
<dbReference type="PANTHER" id="PTHR21349">
    <property type="entry name" value="50S RIBOSOMAL PROTEIN L21"/>
    <property type="match status" value="1"/>
</dbReference>
<dbReference type="PANTHER" id="PTHR21349:SF0">
    <property type="entry name" value="LARGE RIBOSOMAL SUBUNIT PROTEIN BL21M"/>
    <property type="match status" value="1"/>
</dbReference>
<dbReference type="Pfam" id="PF00829">
    <property type="entry name" value="Ribosomal_L21p"/>
    <property type="match status" value="1"/>
</dbReference>
<dbReference type="SUPFAM" id="SSF141091">
    <property type="entry name" value="L21p-like"/>
    <property type="match status" value="1"/>
</dbReference>
<dbReference type="PROSITE" id="PS01169">
    <property type="entry name" value="RIBOSOMAL_L21"/>
    <property type="match status" value="1"/>
</dbReference>
<proteinExistence type="inferred from homology"/>
<keyword id="KW-1185">Reference proteome</keyword>
<keyword id="KW-0687">Ribonucleoprotein</keyword>
<keyword id="KW-0689">Ribosomal protein</keyword>
<keyword id="KW-0694">RNA-binding</keyword>
<keyword id="KW-0699">rRNA-binding</keyword>
<reference key="1">
    <citation type="submission" date="2009-01" db="EMBL/GenBank/DDBJ databases">
        <title>Complete sequence of Diaphorobacter sp. TPSY.</title>
        <authorList>
            <consortium name="US DOE Joint Genome Institute"/>
            <person name="Lucas S."/>
            <person name="Copeland A."/>
            <person name="Lapidus A."/>
            <person name="Glavina del Rio T."/>
            <person name="Tice H."/>
            <person name="Bruce D."/>
            <person name="Goodwin L."/>
            <person name="Pitluck S."/>
            <person name="Chertkov O."/>
            <person name="Brettin T."/>
            <person name="Detter J.C."/>
            <person name="Han C."/>
            <person name="Larimer F."/>
            <person name="Land M."/>
            <person name="Hauser L."/>
            <person name="Kyrpides N."/>
            <person name="Mikhailova N."/>
            <person name="Coates J.D."/>
        </authorList>
    </citation>
    <scope>NUCLEOTIDE SEQUENCE [LARGE SCALE GENOMIC DNA]</scope>
    <source>
        <strain>TPSY</strain>
    </source>
</reference>
<comment type="function">
    <text evidence="1">This protein binds to 23S rRNA in the presence of protein L20.</text>
</comment>
<comment type="subunit">
    <text evidence="1">Part of the 50S ribosomal subunit. Contacts protein L20.</text>
</comment>
<comment type="similarity">
    <text evidence="1">Belongs to the bacterial ribosomal protein bL21 family.</text>
</comment>
<protein>
    <recommendedName>
        <fullName evidence="1">Large ribosomal subunit protein bL21</fullName>
    </recommendedName>
    <alternativeName>
        <fullName evidence="2">50S ribosomal protein L21</fullName>
    </alternativeName>
</protein>
<gene>
    <name evidence="1" type="primary">rplU</name>
    <name type="ordered locus">Dtpsy_0770</name>
</gene>
<accession>B9MDZ5</accession>
<organism>
    <name type="scientific">Acidovorax ebreus (strain TPSY)</name>
    <name type="common">Diaphorobacter sp. (strain TPSY)</name>
    <dbReference type="NCBI Taxonomy" id="535289"/>
    <lineage>
        <taxon>Bacteria</taxon>
        <taxon>Pseudomonadati</taxon>
        <taxon>Pseudomonadota</taxon>
        <taxon>Betaproteobacteria</taxon>
        <taxon>Burkholderiales</taxon>
        <taxon>Comamonadaceae</taxon>
        <taxon>Diaphorobacter</taxon>
    </lineage>
</organism>